<evidence type="ECO:0000250" key="1">
    <source>
        <dbReference type="UniProtKB" id="A0PJ29"/>
    </source>
</evidence>
<evidence type="ECO:0000250" key="2">
    <source>
        <dbReference type="UniProtKB" id="O00767"/>
    </source>
</evidence>
<evidence type="ECO:0000255" key="3"/>
<evidence type="ECO:0000255" key="4">
    <source>
        <dbReference type="PROSITE-ProRule" id="PRU00279"/>
    </source>
</evidence>
<evidence type="ECO:0000256" key="5">
    <source>
        <dbReference type="SAM" id="MobiDB-lite"/>
    </source>
</evidence>
<evidence type="ECO:0000269" key="6">
    <source>
    </source>
</evidence>
<evidence type="ECO:0000303" key="7">
    <source>
    </source>
</evidence>
<evidence type="ECO:0000305" key="8"/>
<evidence type="ECO:0000305" key="9">
    <source>
    </source>
</evidence>
<evidence type="ECO:0000312" key="10">
    <source>
        <dbReference type="EMBL" id="ABL96296.1"/>
    </source>
</evidence>
<name>D8FAD_REBSA</name>
<gene>
    <name evidence="10" type="primary">D8Des</name>
</gene>
<reference key="1">
    <citation type="journal article" date="2007" name="Phytochemistry">
        <title>Isolation and characterization of genes from the marine microalga Pavlova salina encoding three front-end desaturases involved in docosahexaenoic acid biosynthesis.</title>
        <authorList>
            <person name="Zhou X.R."/>
            <person name="Robert S.S."/>
            <person name="Petrie J.R."/>
            <person name="Frampton D.M."/>
            <person name="Mansour M.P."/>
            <person name="Blackburn S.I."/>
            <person name="Nichols P.D."/>
            <person name="Green A.G."/>
            <person name="Singh S.P."/>
        </authorList>
    </citation>
    <scope>NUCLEOTIDE SEQUENCE [MRNA]</scope>
    <source>
        <strain evidence="10">CS-49</strain>
    </source>
</reference>
<organism>
    <name type="scientific">Rebecca salina</name>
    <name type="common">Marine microalga</name>
    <name type="synonym">Pavlova salina</name>
    <dbReference type="NCBI Taxonomy" id="561169"/>
    <lineage>
        <taxon>Eukaryota</taxon>
        <taxon>Haptista</taxon>
        <taxon>Haptophyta</taxon>
        <taxon>Pavlovales</taxon>
        <taxon>Pavlovaceae</taxon>
        <taxon>Rebecca</taxon>
    </lineage>
</organism>
<proteinExistence type="evidence at transcript level"/>
<accession>A4KDP1</accession>
<feature type="chain" id="PRO_0000434762" description="Acyl-lipid 8-desaturase">
    <location>
        <begin position="1"/>
        <end position="427"/>
    </location>
</feature>
<feature type="transmembrane region" description="Helical" evidence="3">
    <location>
        <begin position="189"/>
        <end position="209"/>
    </location>
</feature>
<feature type="transmembrane region" description="Helical" evidence="3">
    <location>
        <begin position="261"/>
        <end position="281"/>
    </location>
</feature>
<feature type="transmembrane region" description="Helical" evidence="3">
    <location>
        <begin position="286"/>
        <end position="306"/>
    </location>
</feature>
<feature type="domain" description="Cytochrome b5 heme-binding" evidence="4">
    <location>
        <begin position="36"/>
        <end position="84"/>
    </location>
</feature>
<feature type="region of interest" description="Disordered" evidence="5">
    <location>
        <begin position="1"/>
        <end position="24"/>
    </location>
</feature>
<feature type="short sequence motif" description="Histidine box-1" evidence="1">
    <location>
        <begin position="178"/>
        <end position="182"/>
    </location>
</feature>
<feature type="short sequence motif" description="Histidine box-2" evidence="1">
    <location>
        <begin position="213"/>
        <end position="218"/>
    </location>
</feature>
<feature type="short sequence motif" description="Histidine box-3" evidence="1">
    <location>
        <begin position="373"/>
        <end position="377"/>
    </location>
</feature>
<feature type="binding site" description="axial binding residue" evidence="4">
    <location>
        <position position="52"/>
    </location>
    <ligand>
        <name>heme</name>
        <dbReference type="ChEBI" id="CHEBI:30413"/>
    </ligand>
    <ligandPart>
        <name>Fe</name>
        <dbReference type="ChEBI" id="CHEBI:18248"/>
    </ligandPart>
</feature>
<feature type="binding site" description="axial binding residue" evidence="4">
    <location>
        <position position="75"/>
    </location>
    <ligand>
        <name>heme</name>
        <dbReference type="ChEBI" id="CHEBI:30413"/>
    </ligand>
    <ligandPart>
        <name>Fe</name>
        <dbReference type="ChEBI" id="CHEBI:18248"/>
    </ligandPart>
</feature>
<protein>
    <recommendedName>
        <fullName evidence="8">Acyl-lipid 8-desaturase</fullName>
        <ecNumber evidence="9">1.14.19.-</ecNumber>
    </recommendedName>
    <alternativeName>
        <fullName evidence="7">Delta-8 desaturase</fullName>
    </alternativeName>
</protein>
<comment type="function">
    <text evidence="6">Fatty acid desaturase that introduces a cis double bond at the 8-position in 20-carbon polyunsaturated fatty acids incorporated in a glycerolipid that contain a Delta(8) double bond to yield (20:4(8,11,14,17)).</text>
</comment>
<comment type="cofactor">
    <cofactor evidence="2">
        <name>Fe(2+)</name>
        <dbReference type="ChEBI" id="CHEBI:29033"/>
    </cofactor>
</comment>
<comment type="subcellular location">
    <subcellularLocation>
        <location evidence="3">Membrane</location>
        <topology evidence="3">Multi-pass membrane protein</topology>
    </subcellularLocation>
</comment>
<comment type="domain">
    <text evidence="8">The cytochrome b5 heme-binding domain acts as the direct electron donor to the active site of the desaturase, and does not require an external cytochrome.</text>
</comment>
<comment type="similarity">
    <text evidence="8">Belongs to the fatty acid desaturase type 1 family.</text>
</comment>
<dbReference type="EC" id="1.14.19.-" evidence="9"/>
<dbReference type="EMBL" id="DQ995518">
    <property type="protein sequence ID" value="ABL96296.1"/>
    <property type="molecule type" value="mRNA"/>
</dbReference>
<dbReference type="SMR" id="A4KDP1"/>
<dbReference type="KEGG" id="ag:ABL96296"/>
<dbReference type="BioCyc" id="MetaCyc:MONOMER-19040"/>
<dbReference type="GO" id="GO:0016020">
    <property type="term" value="C:membrane"/>
    <property type="evidence" value="ECO:0007669"/>
    <property type="project" value="UniProtKB-SubCell"/>
</dbReference>
<dbReference type="GO" id="GO:0046872">
    <property type="term" value="F:metal ion binding"/>
    <property type="evidence" value="ECO:0007669"/>
    <property type="project" value="UniProtKB-KW"/>
</dbReference>
<dbReference type="GO" id="GO:0016717">
    <property type="term" value="F:oxidoreductase activity, acting on paired donors, with oxidation of a pair of donors resulting in the reduction of molecular oxygen to two molecules of water"/>
    <property type="evidence" value="ECO:0000314"/>
    <property type="project" value="UniProtKB"/>
</dbReference>
<dbReference type="GO" id="GO:0042759">
    <property type="term" value="P:long-chain fatty acid biosynthetic process"/>
    <property type="evidence" value="ECO:0000314"/>
    <property type="project" value="UniProtKB"/>
</dbReference>
<dbReference type="GO" id="GO:0006636">
    <property type="term" value="P:unsaturated fatty acid biosynthetic process"/>
    <property type="evidence" value="ECO:0000314"/>
    <property type="project" value="UniProtKB"/>
</dbReference>
<dbReference type="CDD" id="cd03506">
    <property type="entry name" value="Delta6-FADS-like"/>
    <property type="match status" value="1"/>
</dbReference>
<dbReference type="Gene3D" id="3.10.120.10">
    <property type="entry name" value="Cytochrome b5-like heme/steroid binding domain"/>
    <property type="match status" value="1"/>
</dbReference>
<dbReference type="InterPro" id="IPR001199">
    <property type="entry name" value="Cyt_B5-like_heme/steroid-bd"/>
</dbReference>
<dbReference type="InterPro" id="IPR036400">
    <property type="entry name" value="Cyt_B5-like_heme/steroid_sf"/>
</dbReference>
<dbReference type="InterPro" id="IPR005804">
    <property type="entry name" value="FA_desaturase_dom"/>
</dbReference>
<dbReference type="InterPro" id="IPR012171">
    <property type="entry name" value="Fatty_acid_desaturase"/>
</dbReference>
<dbReference type="PANTHER" id="PTHR19353:SF19">
    <property type="entry name" value="DELTA(5) FATTY ACID DESATURASE C-RELATED"/>
    <property type="match status" value="1"/>
</dbReference>
<dbReference type="PANTHER" id="PTHR19353">
    <property type="entry name" value="FATTY ACID DESATURASE 2"/>
    <property type="match status" value="1"/>
</dbReference>
<dbReference type="Pfam" id="PF00173">
    <property type="entry name" value="Cyt-b5"/>
    <property type="match status" value="1"/>
</dbReference>
<dbReference type="Pfam" id="PF00487">
    <property type="entry name" value="FA_desaturase"/>
    <property type="match status" value="1"/>
</dbReference>
<dbReference type="PIRSF" id="PIRSF015921">
    <property type="entry name" value="FA_sphinglp_des"/>
    <property type="match status" value="1"/>
</dbReference>
<dbReference type="SUPFAM" id="SSF55856">
    <property type="entry name" value="Cytochrome b5-like heme/steroid binding domain"/>
    <property type="match status" value="1"/>
</dbReference>
<dbReference type="PROSITE" id="PS50255">
    <property type="entry name" value="CYTOCHROME_B5_2"/>
    <property type="match status" value="1"/>
</dbReference>
<keyword id="KW-0249">Electron transport</keyword>
<keyword id="KW-0275">Fatty acid biosynthesis</keyword>
<keyword id="KW-0276">Fatty acid metabolism</keyword>
<keyword id="KW-0349">Heme</keyword>
<keyword id="KW-0408">Iron</keyword>
<keyword id="KW-0444">Lipid biosynthesis</keyword>
<keyword id="KW-0443">Lipid metabolism</keyword>
<keyword id="KW-0472">Membrane</keyword>
<keyword id="KW-0479">Metal-binding</keyword>
<keyword id="KW-0560">Oxidoreductase</keyword>
<keyword id="KW-0812">Transmembrane</keyword>
<keyword id="KW-1133">Transmembrane helix</keyword>
<keyword id="KW-0813">Transport</keyword>
<sequence length="427" mass="47982">MGRGGDSSGQAHPAAELAVPSDRAEVSNADSKALHIVLYGKRVDVTKFQRTHPGGSKVFRIFQDRDATEQFESYHSKRAIKMMEGMLKKSEDAPADTPLPSQSPMGKDFKAMIERHVAAGYYDPCPLDELFKLSLVLLPTFAGMYMLKAGVGSPLCGALMVSFGWYLDGWLAHDYLHHSVFKGSVARTVGWNNAAGYFLGFVQGYAVEWWRARHNTHHVCTNEDGSDPDIKTAPLLIYVRNKPSIAKRLNAFQRYQQYYYVPVMAILDLYWRLESIAYVAMRLPKMLPQALALVAHYAIVAWVFAGNYHLLPLVTVLRGFGTGITVFATHYGEDILDADQVRHMTLVEQTALTSRNISGGWLVNVLTGFISLQTEHHLFPMMPTGNLMTIQPEVRAFFKKHGLEYREGNLIECVRQNIRALAFEHLL</sequence>